<proteinExistence type="inferred from homology"/>
<reference key="1">
    <citation type="submission" date="2005-08" db="EMBL/GenBank/DDBJ databases">
        <title>Complete sequence of Synechococcus sp. CC9902.</title>
        <authorList>
            <person name="Copeland A."/>
            <person name="Lucas S."/>
            <person name="Lapidus A."/>
            <person name="Barry K."/>
            <person name="Detter J.C."/>
            <person name="Glavina T."/>
            <person name="Hammon N."/>
            <person name="Israni S."/>
            <person name="Pitluck S."/>
            <person name="Martinez M."/>
            <person name="Schmutz J."/>
            <person name="Larimer F."/>
            <person name="Land M."/>
            <person name="Kyrpides N."/>
            <person name="Ivanova N."/>
            <person name="Richardson P."/>
        </authorList>
    </citation>
    <scope>NUCLEOTIDE SEQUENCE [LARGE SCALE GENOMIC DNA]</scope>
    <source>
        <strain>CC9902</strain>
    </source>
</reference>
<name>RL19_SYNS9</name>
<keyword id="KW-1185">Reference proteome</keyword>
<keyword id="KW-0687">Ribonucleoprotein</keyword>
<keyword id="KW-0689">Ribosomal protein</keyword>
<comment type="function">
    <text evidence="1">This protein is located at the 30S-50S ribosomal subunit interface and may play a role in the structure and function of the aminoacyl-tRNA binding site.</text>
</comment>
<comment type="similarity">
    <text evidence="1">Belongs to the bacterial ribosomal protein bL19 family.</text>
</comment>
<comment type="sequence caution" evidence="2">
    <conflict type="erroneous initiation">
        <sequence resource="EMBL-CDS" id="ABB26674"/>
    </conflict>
</comment>
<organism>
    <name type="scientific">Synechococcus sp. (strain CC9902)</name>
    <dbReference type="NCBI Taxonomy" id="316279"/>
    <lineage>
        <taxon>Bacteria</taxon>
        <taxon>Bacillati</taxon>
        <taxon>Cyanobacteriota</taxon>
        <taxon>Cyanophyceae</taxon>
        <taxon>Synechococcales</taxon>
        <taxon>Synechococcaceae</taxon>
        <taxon>Synechococcus</taxon>
    </lineage>
</organism>
<dbReference type="EMBL" id="CP000097">
    <property type="protein sequence ID" value="ABB26674.1"/>
    <property type="status" value="ALT_INIT"/>
    <property type="molecule type" value="Genomic_DNA"/>
</dbReference>
<dbReference type="RefSeq" id="WP_011360483.1">
    <property type="nucleotide sequence ID" value="NC_007513.1"/>
</dbReference>
<dbReference type="SMR" id="Q3AWM9"/>
<dbReference type="STRING" id="316279.Syncc9902_1716"/>
<dbReference type="KEGG" id="sye:Syncc9902_1716"/>
<dbReference type="eggNOG" id="COG0335">
    <property type="taxonomic scope" value="Bacteria"/>
</dbReference>
<dbReference type="HOGENOM" id="CLU_103507_2_0_3"/>
<dbReference type="OrthoDB" id="9803541at2"/>
<dbReference type="Proteomes" id="UP000002712">
    <property type="component" value="Chromosome"/>
</dbReference>
<dbReference type="GO" id="GO:0022625">
    <property type="term" value="C:cytosolic large ribosomal subunit"/>
    <property type="evidence" value="ECO:0007669"/>
    <property type="project" value="TreeGrafter"/>
</dbReference>
<dbReference type="GO" id="GO:0003735">
    <property type="term" value="F:structural constituent of ribosome"/>
    <property type="evidence" value="ECO:0007669"/>
    <property type="project" value="InterPro"/>
</dbReference>
<dbReference type="GO" id="GO:0006412">
    <property type="term" value="P:translation"/>
    <property type="evidence" value="ECO:0007669"/>
    <property type="project" value="UniProtKB-UniRule"/>
</dbReference>
<dbReference type="FunFam" id="2.30.30.790:FF:000001">
    <property type="entry name" value="50S ribosomal protein L19"/>
    <property type="match status" value="1"/>
</dbReference>
<dbReference type="Gene3D" id="2.30.30.790">
    <property type="match status" value="1"/>
</dbReference>
<dbReference type="HAMAP" id="MF_00402">
    <property type="entry name" value="Ribosomal_bL19"/>
    <property type="match status" value="1"/>
</dbReference>
<dbReference type="InterPro" id="IPR001857">
    <property type="entry name" value="Ribosomal_bL19"/>
</dbReference>
<dbReference type="InterPro" id="IPR018257">
    <property type="entry name" value="Ribosomal_bL19_CS"/>
</dbReference>
<dbReference type="InterPro" id="IPR038657">
    <property type="entry name" value="Ribosomal_bL19_sf"/>
</dbReference>
<dbReference type="InterPro" id="IPR008991">
    <property type="entry name" value="Translation_prot_SH3-like_sf"/>
</dbReference>
<dbReference type="NCBIfam" id="TIGR01024">
    <property type="entry name" value="rplS_bact"/>
    <property type="match status" value="1"/>
</dbReference>
<dbReference type="PANTHER" id="PTHR15680:SF9">
    <property type="entry name" value="LARGE RIBOSOMAL SUBUNIT PROTEIN BL19M"/>
    <property type="match status" value="1"/>
</dbReference>
<dbReference type="PANTHER" id="PTHR15680">
    <property type="entry name" value="RIBOSOMAL PROTEIN L19"/>
    <property type="match status" value="1"/>
</dbReference>
<dbReference type="Pfam" id="PF01245">
    <property type="entry name" value="Ribosomal_L19"/>
    <property type="match status" value="1"/>
</dbReference>
<dbReference type="PIRSF" id="PIRSF002191">
    <property type="entry name" value="Ribosomal_L19"/>
    <property type="match status" value="1"/>
</dbReference>
<dbReference type="PRINTS" id="PR00061">
    <property type="entry name" value="RIBOSOMALL19"/>
</dbReference>
<dbReference type="SUPFAM" id="SSF50104">
    <property type="entry name" value="Translation proteins SH3-like domain"/>
    <property type="match status" value="1"/>
</dbReference>
<dbReference type="PROSITE" id="PS01015">
    <property type="entry name" value="RIBOSOMAL_L19"/>
    <property type="match status" value="1"/>
</dbReference>
<evidence type="ECO:0000255" key="1">
    <source>
        <dbReference type="HAMAP-Rule" id="MF_00402"/>
    </source>
</evidence>
<evidence type="ECO:0000305" key="2"/>
<gene>
    <name evidence="1" type="primary">rplS</name>
    <name evidence="1" type="synonym">rpl19</name>
    <name type="ordered locus">Syncc9902_1716</name>
</gene>
<sequence>MATKAKPAAASKKLCAEELIREFESAQQKTDLPEIYVGDTVRVGVRISEGNRERVQPYEGVVISKRHGGMNQTITVRRIFQGIGVERVFMVHSPQVANIKVERRGKVRRAKLFYLRERVGKATRVKQRFDR</sequence>
<feature type="chain" id="PRO_0000252553" description="Large ribosomal subunit protein bL19">
    <location>
        <begin position="1"/>
        <end position="131"/>
    </location>
</feature>
<protein>
    <recommendedName>
        <fullName evidence="1">Large ribosomal subunit protein bL19</fullName>
    </recommendedName>
    <alternativeName>
        <fullName evidence="2">50S ribosomal protein L19</fullName>
    </alternativeName>
</protein>
<accession>Q3AWM9</accession>